<evidence type="ECO:0000255" key="1">
    <source>
        <dbReference type="HAMAP-Rule" id="MF_00717"/>
    </source>
</evidence>
<reference key="1">
    <citation type="submission" date="2003-11" db="EMBL/GenBank/DDBJ databases">
        <title>Whole genome sequence of Porphyra yezoensis chloroplast.</title>
        <authorList>
            <person name="Kunimoto M."/>
            <person name="Morishima K."/>
            <person name="Yoshikawa M."/>
            <person name="Fukuda S."/>
            <person name="Kobayashi T."/>
            <person name="Kobayashi M."/>
            <person name="Okazaki T."/>
            <person name="Ohara I."/>
            <person name="Nakayama I."/>
        </authorList>
    </citation>
    <scope>NUCLEOTIDE SEQUENCE [LARGE SCALE GENOMIC DNA]</scope>
    <source>
        <strain>U-51</strain>
    </source>
</reference>
<feature type="chain" id="PRO_0000277149" description="Photosystem II reaction center protein Y">
    <location>
        <begin position="1"/>
        <end position="36"/>
    </location>
</feature>
<feature type="topological domain" description="Lumenal" evidence="1">
    <location>
        <begin position="1"/>
        <end position="4"/>
    </location>
</feature>
<feature type="transmembrane region" description="Helical" evidence="1">
    <location>
        <begin position="5"/>
        <end position="23"/>
    </location>
</feature>
<feature type="topological domain" description="Stromal" evidence="1">
    <location>
        <begin position="24"/>
        <end position="36"/>
    </location>
</feature>
<proteinExistence type="inferred from homology"/>
<comment type="function">
    <text evidence="1">Loosely associated component of the core of photosystem II (PSII), it is not always seen in crystals. PSII is a light-driven water plastoquinone oxidoreductase, using light energy to abstract electrons from H(2)O, generating a proton gradient subsequently used for ATP formation.</text>
</comment>
<comment type="subunit">
    <text evidence="1">PSII is composed of 1 copy each of membrane proteins PsbA, PsbB, PsbC, PsbD, PsbE, PsbF, PsbH, PsbI, PsbJ, PsbK, PsbL, PsbM, PsbT, PsbX, PsbY, PsbZ, Psb30/Ycf12, at least 3 peripheral proteins of the oxygen-evolving complex and a large number of cofactors. It forms dimeric complexes.</text>
</comment>
<comment type="subcellular location">
    <subcellularLocation>
        <location evidence="1">Plastid</location>
        <location evidence="1">Chloroplast thylakoid membrane</location>
        <topology evidence="1">Single-pass membrane protein</topology>
    </subcellularLocation>
</comment>
<comment type="similarity">
    <text evidence="1">Belongs to the PsbY family.</text>
</comment>
<geneLocation type="chloroplast"/>
<name>PSBY_PYRYE</name>
<protein>
    <recommendedName>
        <fullName evidence="1">Photosystem II reaction center protein Y</fullName>
    </recommendedName>
</protein>
<organism>
    <name type="scientific">Pyropia yezoensis</name>
    <name type="common">Susabi-nori</name>
    <name type="synonym">Porphyra yezoensis</name>
    <dbReference type="NCBI Taxonomy" id="2788"/>
    <lineage>
        <taxon>Eukaryota</taxon>
        <taxon>Rhodophyta</taxon>
        <taxon>Bangiophyceae</taxon>
        <taxon>Bangiales</taxon>
        <taxon>Bangiaceae</taxon>
        <taxon>Pyropia</taxon>
    </lineage>
</organism>
<sequence>MDSRLLVVLIPVLAAASWAVYNIGRVALQQFRKMTS</sequence>
<gene>
    <name evidence="1" type="primary">psbY</name>
</gene>
<dbReference type="EMBL" id="AP006715">
    <property type="protein sequence ID" value="BAE92330.1"/>
    <property type="molecule type" value="Genomic_DNA"/>
</dbReference>
<dbReference type="RefSeq" id="YP_536887.1">
    <property type="nucleotide sequence ID" value="NC_007932.1"/>
</dbReference>
<dbReference type="SMR" id="Q1XDT1"/>
<dbReference type="GO" id="GO:0009535">
    <property type="term" value="C:chloroplast thylakoid membrane"/>
    <property type="evidence" value="ECO:0007669"/>
    <property type="project" value="UniProtKB-SubCell"/>
</dbReference>
<dbReference type="GO" id="GO:0009523">
    <property type="term" value="C:photosystem II"/>
    <property type="evidence" value="ECO:0007669"/>
    <property type="project" value="UniProtKB-KW"/>
</dbReference>
<dbReference type="GO" id="GO:0030145">
    <property type="term" value="F:manganese ion binding"/>
    <property type="evidence" value="ECO:0007669"/>
    <property type="project" value="InterPro"/>
</dbReference>
<dbReference type="GO" id="GO:0015979">
    <property type="term" value="P:photosynthesis"/>
    <property type="evidence" value="ECO:0007669"/>
    <property type="project" value="UniProtKB-UniRule"/>
</dbReference>
<dbReference type="HAMAP" id="MF_00717">
    <property type="entry name" value="PSII_PsbY"/>
    <property type="match status" value="1"/>
</dbReference>
<dbReference type="InterPro" id="IPR009388">
    <property type="entry name" value="PSII_PsbY"/>
</dbReference>
<dbReference type="NCBIfam" id="NF009711">
    <property type="entry name" value="PRK13240.1"/>
    <property type="match status" value="1"/>
</dbReference>
<dbReference type="Pfam" id="PF06298">
    <property type="entry name" value="PsbY"/>
    <property type="match status" value="1"/>
</dbReference>
<keyword id="KW-0150">Chloroplast</keyword>
<keyword id="KW-0472">Membrane</keyword>
<keyword id="KW-0602">Photosynthesis</keyword>
<keyword id="KW-0604">Photosystem II</keyword>
<keyword id="KW-0934">Plastid</keyword>
<keyword id="KW-0793">Thylakoid</keyword>
<keyword id="KW-0812">Transmembrane</keyword>
<keyword id="KW-1133">Transmembrane helix</keyword>
<accession>Q1XDT1</accession>